<feature type="chain" id="PRO_0000403515" description="Flap endonuclease 1">
    <location>
        <begin position="1"/>
        <end position="388"/>
    </location>
</feature>
<feature type="region of interest" description="N-domain">
    <location>
        <begin position="1"/>
        <end position="105"/>
    </location>
</feature>
<feature type="region of interest" description="I-domain">
    <location>
        <begin position="123"/>
        <end position="254"/>
    </location>
</feature>
<feature type="region of interest" description="Interaction with PCNA" evidence="1">
    <location>
        <begin position="338"/>
        <end position="346"/>
    </location>
</feature>
<feature type="region of interest" description="Disordered" evidence="2">
    <location>
        <begin position="349"/>
        <end position="388"/>
    </location>
</feature>
<feature type="compositionally biased region" description="Basic residues" evidence="2">
    <location>
        <begin position="375"/>
        <end position="388"/>
    </location>
</feature>
<feature type="binding site" evidence="1">
    <location>
        <position position="34"/>
    </location>
    <ligand>
        <name>Mg(2+)</name>
        <dbReference type="ChEBI" id="CHEBI:18420"/>
        <label>1</label>
    </ligand>
</feature>
<feature type="binding site" evidence="1">
    <location>
        <position position="71"/>
    </location>
    <ligand>
        <name>DNA</name>
        <dbReference type="ChEBI" id="CHEBI:16991"/>
    </ligand>
</feature>
<feature type="binding site" evidence="1">
    <location>
        <position position="87"/>
    </location>
    <ligand>
        <name>Mg(2+)</name>
        <dbReference type="ChEBI" id="CHEBI:18420"/>
        <label>1</label>
    </ligand>
</feature>
<feature type="binding site" evidence="1">
    <location>
        <position position="159"/>
    </location>
    <ligand>
        <name>DNA</name>
        <dbReference type="ChEBI" id="CHEBI:16991"/>
    </ligand>
</feature>
<feature type="binding site" evidence="1">
    <location>
        <position position="159"/>
    </location>
    <ligand>
        <name>Mg(2+)</name>
        <dbReference type="ChEBI" id="CHEBI:18420"/>
        <label>1</label>
    </ligand>
</feature>
<feature type="binding site" evidence="1">
    <location>
        <position position="161"/>
    </location>
    <ligand>
        <name>Mg(2+)</name>
        <dbReference type="ChEBI" id="CHEBI:18420"/>
        <label>1</label>
    </ligand>
</feature>
<feature type="binding site" evidence="1">
    <location>
        <position position="180"/>
    </location>
    <ligand>
        <name>Mg(2+)</name>
        <dbReference type="ChEBI" id="CHEBI:18420"/>
        <label>2</label>
    </ligand>
</feature>
<feature type="binding site" evidence="1">
    <location>
        <position position="182"/>
    </location>
    <ligand>
        <name>Mg(2+)</name>
        <dbReference type="ChEBI" id="CHEBI:18420"/>
        <label>2</label>
    </ligand>
</feature>
<feature type="binding site" evidence="1">
    <location>
        <position position="232"/>
    </location>
    <ligand>
        <name>DNA</name>
        <dbReference type="ChEBI" id="CHEBI:16991"/>
    </ligand>
</feature>
<feature type="binding site" evidence="1">
    <location>
        <position position="234"/>
    </location>
    <ligand>
        <name>DNA</name>
        <dbReference type="ChEBI" id="CHEBI:16991"/>
    </ligand>
</feature>
<feature type="binding site" evidence="1">
    <location>
        <position position="234"/>
    </location>
    <ligand>
        <name>Mg(2+)</name>
        <dbReference type="ChEBI" id="CHEBI:18420"/>
        <label>2</label>
    </ligand>
</feature>
<proteinExistence type="inferred from homology"/>
<name>FEN1_HETP5</name>
<accession>D3BN56</accession>
<dbReference type="EC" id="3.1.-.-" evidence="1"/>
<dbReference type="EMBL" id="ADBJ01000043">
    <property type="protein sequence ID" value="EFA77418.1"/>
    <property type="molecule type" value="Genomic_DNA"/>
</dbReference>
<dbReference type="RefSeq" id="XP_020429547.1">
    <property type="nucleotide sequence ID" value="XM_020583360.1"/>
</dbReference>
<dbReference type="SMR" id="D3BN56"/>
<dbReference type="FunCoup" id="D3BN56">
    <property type="interactions" value="909"/>
</dbReference>
<dbReference type="STRING" id="670386.D3BN56"/>
<dbReference type="GeneID" id="31368101"/>
<dbReference type="InParanoid" id="D3BN56"/>
<dbReference type="OMA" id="MGIPWVQ"/>
<dbReference type="Proteomes" id="UP000001396">
    <property type="component" value="Unassembled WGS sequence"/>
</dbReference>
<dbReference type="GO" id="GO:0005739">
    <property type="term" value="C:mitochondrion"/>
    <property type="evidence" value="ECO:0007669"/>
    <property type="project" value="UniProtKB-SubCell"/>
</dbReference>
<dbReference type="GO" id="GO:0005730">
    <property type="term" value="C:nucleolus"/>
    <property type="evidence" value="ECO:0007669"/>
    <property type="project" value="UniProtKB-SubCell"/>
</dbReference>
<dbReference type="GO" id="GO:0005654">
    <property type="term" value="C:nucleoplasm"/>
    <property type="evidence" value="ECO:0007669"/>
    <property type="project" value="UniProtKB-SubCell"/>
</dbReference>
<dbReference type="GO" id="GO:0008409">
    <property type="term" value="F:5'-3' exonuclease activity"/>
    <property type="evidence" value="ECO:0007669"/>
    <property type="project" value="UniProtKB-UniRule"/>
</dbReference>
<dbReference type="GO" id="GO:0017108">
    <property type="term" value="F:5'-flap endonuclease activity"/>
    <property type="evidence" value="ECO:0007669"/>
    <property type="project" value="UniProtKB-UniRule"/>
</dbReference>
<dbReference type="GO" id="GO:0003677">
    <property type="term" value="F:DNA binding"/>
    <property type="evidence" value="ECO:0007669"/>
    <property type="project" value="UniProtKB-UniRule"/>
</dbReference>
<dbReference type="GO" id="GO:0000287">
    <property type="term" value="F:magnesium ion binding"/>
    <property type="evidence" value="ECO:0007669"/>
    <property type="project" value="UniProtKB-UniRule"/>
</dbReference>
<dbReference type="GO" id="GO:0006284">
    <property type="term" value="P:base-excision repair"/>
    <property type="evidence" value="ECO:0007669"/>
    <property type="project" value="UniProtKB-UniRule"/>
</dbReference>
<dbReference type="GO" id="GO:0043137">
    <property type="term" value="P:DNA replication, removal of RNA primer"/>
    <property type="evidence" value="ECO:0007669"/>
    <property type="project" value="UniProtKB-UniRule"/>
</dbReference>
<dbReference type="CDD" id="cd09907">
    <property type="entry name" value="H3TH_FEN1-Euk"/>
    <property type="match status" value="1"/>
</dbReference>
<dbReference type="CDD" id="cd09867">
    <property type="entry name" value="PIN_FEN1"/>
    <property type="match status" value="1"/>
</dbReference>
<dbReference type="FunFam" id="1.10.150.20:FF:000009">
    <property type="entry name" value="Flap endonuclease 1"/>
    <property type="match status" value="1"/>
</dbReference>
<dbReference type="FunFam" id="3.40.50.1010:FF:000003">
    <property type="entry name" value="Flap endonuclease 1"/>
    <property type="match status" value="1"/>
</dbReference>
<dbReference type="Gene3D" id="1.10.150.20">
    <property type="entry name" value="5' to 3' exonuclease, C-terminal subdomain"/>
    <property type="match status" value="1"/>
</dbReference>
<dbReference type="Gene3D" id="3.40.50.1010">
    <property type="entry name" value="5'-nuclease"/>
    <property type="match status" value="1"/>
</dbReference>
<dbReference type="HAMAP" id="MF_00614">
    <property type="entry name" value="Fen"/>
    <property type="match status" value="1"/>
</dbReference>
<dbReference type="InterPro" id="IPR036279">
    <property type="entry name" value="5-3_exonuclease_C_sf"/>
</dbReference>
<dbReference type="InterPro" id="IPR023426">
    <property type="entry name" value="Flap_endonuc"/>
</dbReference>
<dbReference type="InterPro" id="IPR008918">
    <property type="entry name" value="HhH2"/>
</dbReference>
<dbReference type="InterPro" id="IPR029060">
    <property type="entry name" value="PIN-like_dom_sf"/>
</dbReference>
<dbReference type="InterPro" id="IPR006086">
    <property type="entry name" value="XPG-I_dom"/>
</dbReference>
<dbReference type="InterPro" id="IPR006084">
    <property type="entry name" value="XPG/Rad2"/>
</dbReference>
<dbReference type="InterPro" id="IPR019974">
    <property type="entry name" value="XPG_CS"/>
</dbReference>
<dbReference type="InterPro" id="IPR006085">
    <property type="entry name" value="XPG_DNA_repair_N"/>
</dbReference>
<dbReference type="PANTHER" id="PTHR11081:SF9">
    <property type="entry name" value="FLAP ENDONUCLEASE 1"/>
    <property type="match status" value="1"/>
</dbReference>
<dbReference type="PANTHER" id="PTHR11081">
    <property type="entry name" value="FLAP ENDONUCLEASE FAMILY MEMBER"/>
    <property type="match status" value="1"/>
</dbReference>
<dbReference type="Pfam" id="PF00867">
    <property type="entry name" value="XPG_I"/>
    <property type="match status" value="1"/>
</dbReference>
<dbReference type="Pfam" id="PF00752">
    <property type="entry name" value="XPG_N"/>
    <property type="match status" value="1"/>
</dbReference>
<dbReference type="PRINTS" id="PR00853">
    <property type="entry name" value="XPGRADSUPER"/>
</dbReference>
<dbReference type="SMART" id="SM00279">
    <property type="entry name" value="HhH2"/>
    <property type="match status" value="1"/>
</dbReference>
<dbReference type="SMART" id="SM00484">
    <property type="entry name" value="XPGI"/>
    <property type="match status" value="1"/>
</dbReference>
<dbReference type="SMART" id="SM00485">
    <property type="entry name" value="XPGN"/>
    <property type="match status" value="1"/>
</dbReference>
<dbReference type="SUPFAM" id="SSF47807">
    <property type="entry name" value="5' to 3' exonuclease, C-terminal subdomain"/>
    <property type="match status" value="1"/>
</dbReference>
<dbReference type="SUPFAM" id="SSF88723">
    <property type="entry name" value="PIN domain-like"/>
    <property type="match status" value="1"/>
</dbReference>
<dbReference type="PROSITE" id="PS00841">
    <property type="entry name" value="XPG_1"/>
    <property type="match status" value="1"/>
</dbReference>
<organism>
    <name type="scientific">Heterostelium pallidum (strain ATCC 26659 / Pp 5 / PN500)</name>
    <name type="common">Cellular slime mold</name>
    <name type="synonym">Polysphondylium pallidum</name>
    <dbReference type="NCBI Taxonomy" id="670386"/>
    <lineage>
        <taxon>Eukaryota</taxon>
        <taxon>Amoebozoa</taxon>
        <taxon>Evosea</taxon>
        <taxon>Eumycetozoa</taxon>
        <taxon>Dictyostelia</taxon>
        <taxon>Acytosteliales</taxon>
        <taxon>Acytosteliaceae</taxon>
        <taxon>Heterostelium</taxon>
    </lineage>
</organism>
<evidence type="ECO:0000255" key="1">
    <source>
        <dbReference type="HAMAP-Rule" id="MF_03140"/>
    </source>
</evidence>
<evidence type="ECO:0000256" key="2">
    <source>
        <dbReference type="SAM" id="MobiDB-lite"/>
    </source>
</evidence>
<protein>
    <recommendedName>
        <fullName evidence="1">Flap endonuclease 1</fullName>
        <shortName evidence="1">FEN-1</shortName>
        <ecNumber evidence="1">3.1.-.-</ecNumber>
    </recommendedName>
    <alternativeName>
        <fullName evidence="1">Flap structure-specific endonuclease 1</fullName>
    </alternativeName>
</protein>
<gene>
    <name evidence="1" type="primary">repG</name>
    <name type="ORF">PPL_12634</name>
</gene>
<keyword id="KW-0227">DNA damage</keyword>
<keyword id="KW-0234">DNA repair</keyword>
<keyword id="KW-0235">DNA replication</keyword>
<keyword id="KW-0255">Endonuclease</keyword>
<keyword id="KW-0269">Exonuclease</keyword>
<keyword id="KW-0378">Hydrolase</keyword>
<keyword id="KW-0460">Magnesium</keyword>
<keyword id="KW-0479">Metal-binding</keyword>
<keyword id="KW-0496">Mitochondrion</keyword>
<keyword id="KW-0540">Nuclease</keyword>
<keyword id="KW-0539">Nucleus</keyword>
<keyword id="KW-0597">Phosphoprotein</keyword>
<keyword id="KW-1185">Reference proteome</keyword>
<sequence length="388" mass="43289">MGIKNLTSLIEENAPSAIKSNDLKSYSGRIVAIDASTSMYQFLIAINTEMGAALMNANGETTSHLQGMFYRTIKLMTRGIKPIYVFDGKAPVLKSGELAKRYARRKEAEQQLEEANEVGNSEDVQKFQKRTISASRKQNEECKKLLELMGVPIVQAPCEAEAQCAELCKGGKAWATGSEDMDSLTLGTTILLRRLTFSEARKLPIMEIELEKVLDGLDLTHDQFVDLCILLGCDYCDTIKGIGPKKSFDMITKHKNIQTVIQNIDRTKNPIPESFPYEEVRELFKNPDVIKCQDLPEIVWKEPDVDGLIKYLVGEMGFNETRVQQGIEKLKKYKDTGVQTRIDTFFPMIKRPRDEDAGSAKKKQKTVAKPGAAGSKKKPAAKKAAGKK</sequence>
<reference key="1">
    <citation type="journal article" date="2011" name="Genome Res.">
        <title>Phylogeny-wide analysis of social amoeba genomes highlights ancient origins for complex intercellular communication.</title>
        <authorList>
            <person name="Heidel A.J."/>
            <person name="Lawal H.M."/>
            <person name="Felder M."/>
            <person name="Schilde C."/>
            <person name="Helps N.R."/>
            <person name="Tunggal B."/>
            <person name="Rivero F."/>
            <person name="John U."/>
            <person name="Schleicher M."/>
            <person name="Eichinger L."/>
            <person name="Platzer M."/>
            <person name="Noegel A.A."/>
            <person name="Schaap P."/>
            <person name="Gloeckner G."/>
        </authorList>
    </citation>
    <scope>NUCLEOTIDE SEQUENCE [LARGE SCALE GENOMIC DNA]</scope>
    <source>
        <strain>ATCC 26659 / Pp 5 / PN500</strain>
    </source>
</reference>
<comment type="function">
    <text evidence="1">Structure-specific nuclease with 5'-flap endonuclease and 5'-3' exonuclease activities involved in DNA replication and repair. During DNA replication, cleaves the 5'-overhanging flap structure that is generated by displacement synthesis when DNA polymerase encounters the 5'-end of a downstream Okazaki fragment. It enters the flap from the 5'-end and then tracks to cleave the flap base, leaving a nick for ligation. Also involved in the long patch base excision repair (LP-BER) pathway, by cleaving within the apurinic/apyrimidinic (AP) site-terminated flap. Acts as a genome stabilization factor that prevents flaps from equilibrating into structures that lead to duplications and deletions. Also possesses 5'-3' exonuclease activity on nicked or gapped double-stranded DNA, and exhibits RNase H activity. Also involved in replication and repair of rDNA and in repairing mitochondrial DNA.</text>
</comment>
<comment type="cofactor">
    <cofactor evidence="1">
        <name>Mg(2+)</name>
        <dbReference type="ChEBI" id="CHEBI:18420"/>
    </cofactor>
    <text evidence="1">Binds 2 magnesium ions per subunit. They probably participate in the reaction catalyzed by the enzyme. May bind an additional third magnesium ion after substrate binding.</text>
</comment>
<comment type="subunit">
    <text evidence="1">Interacts with PCNA. Three molecules of repG bind to one PCNA trimer with each molecule binding to one PCNA monomer. PCNA stimulates the nuclease activity without altering cleavage specificity.</text>
</comment>
<comment type="subcellular location">
    <subcellularLocation>
        <location evidence="1">Nucleus</location>
        <location evidence="1">Nucleolus</location>
    </subcellularLocation>
    <subcellularLocation>
        <location evidence="1">Nucleus</location>
        <location evidence="1">Nucleoplasm</location>
    </subcellularLocation>
    <subcellularLocation>
        <location evidence="1">Mitochondrion</location>
    </subcellularLocation>
    <text evidence="1">Resides mostly in the nucleoli and relocalizes to the nucleoplasm upon DNA damage.</text>
</comment>
<comment type="PTM">
    <text evidence="1">Phosphorylated. Phosphorylation upon DNA damage induces relocalization to the nuclear plasma.</text>
</comment>
<comment type="similarity">
    <text evidence="1">Belongs to the XPG/RAD2 endonuclease family. FEN1 subfamily.</text>
</comment>